<dbReference type="PIR" id="S07213">
    <property type="entry name" value="INFLE"/>
</dbReference>
<dbReference type="SMR" id="P09477"/>
<dbReference type="GO" id="GO:0005615">
    <property type="term" value="C:extracellular space"/>
    <property type="evidence" value="ECO:0007669"/>
    <property type="project" value="TreeGrafter"/>
</dbReference>
<dbReference type="GO" id="GO:0005179">
    <property type="term" value="F:hormone activity"/>
    <property type="evidence" value="ECO:0007669"/>
    <property type="project" value="UniProtKB-KW"/>
</dbReference>
<dbReference type="GO" id="GO:0006006">
    <property type="term" value="P:glucose metabolic process"/>
    <property type="evidence" value="ECO:0007669"/>
    <property type="project" value="UniProtKB-KW"/>
</dbReference>
<dbReference type="CDD" id="cd04367">
    <property type="entry name" value="IlGF_insulin_like"/>
    <property type="match status" value="1"/>
</dbReference>
<dbReference type="Gene3D" id="1.10.100.10">
    <property type="entry name" value="Insulin-like"/>
    <property type="match status" value="1"/>
</dbReference>
<dbReference type="InterPro" id="IPR004825">
    <property type="entry name" value="Insulin"/>
</dbReference>
<dbReference type="InterPro" id="IPR016179">
    <property type="entry name" value="Insulin-like"/>
</dbReference>
<dbReference type="InterPro" id="IPR036438">
    <property type="entry name" value="Insulin-like_sf"/>
</dbReference>
<dbReference type="InterPro" id="IPR022353">
    <property type="entry name" value="Insulin_CS"/>
</dbReference>
<dbReference type="InterPro" id="IPR022352">
    <property type="entry name" value="Insulin_family"/>
</dbReference>
<dbReference type="PANTHER" id="PTHR11454:SF9">
    <property type="entry name" value="INSULIN"/>
    <property type="match status" value="1"/>
</dbReference>
<dbReference type="PANTHER" id="PTHR11454">
    <property type="entry name" value="INSULIN/INSULIN GROWTH FACTOR"/>
    <property type="match status" value="1"/>
</dbReference>
<dbReference type="Pfam" id="PF00049">
    <property type="entry name" value="Insulin"/>
    <property type="match status" value="2"/>
</dbReference>
<dbReference type="PRINTS" id="PR00277">
    <property type="entry name" value="INSULIN"/>
</dbReference>
<dbReference type="PRINTS" id="PR00276">
    <property type="entry name" value="INSULINFAMLY"/>
</dbReference>
<dbReference type="SMART" id="SM00078">
    <property type="entry name" value="IlGF"/>
    <property type="match status" value="1"/>
</dbReference>
<dbReference type="SUPFAM" id="SSF56994">
    <property type="entry name" value="Insulin-like"/>
    <property type="match status" value="1"/>
</dbReference>
<dbReference type="PROSITE" id="PS00262">
    <property type="entry name" value="INSULIN"/>
    <property type="match status" value="1"/>
</dbReference>
<reference key="1">
    <citation type="journal article" date="1987" name="Gen. Comp. Endocrinol.">
        <title>Primary structure of insulin and glucagon from the flounder (Platichthys flesus).</title>
        <authorList>
            <person name="Conlon J.M."/>
            <person name="Davis M.S."/>
            <person name="Thim L."/>
        </authorList>
    </citation>
    <scope>PROTEIN SEQUENCE</scope>
</reference>
<comment type="function">
    <text>Insulin decreases blood glucose concentration. It increases cell permeability to monosaccharides, amino acids and fatty acids. It accelerates glycolysis, the pentose phosphate cycle, and glycogen synthesis in liver.</text>
</comment>
<comment type="subunit">
    <text>Heterodimer of a B chain and an A chain linked by two disulfide bonds.</text>
</comment>
<comment type="subcellular location">
    <subcellularLocation>
        <location>Secreted</location>
    </subcellularLocation>
</comment>
<comment type="similarity">
    <text evidence="1">Belongs to the insulin family.</text>
</comment>
<protein>
    <recommendedName>
        <fullName>Insulin</fullName>
    </recommendedName>
    <component>
        <recommendedName>
            <fullName>Insulin B chain</fullName>
        </recommendedName>
    </component>
    <component>
        <recommendedName>
            <fullName>Insulin A chain</fullName>
        </recommendedName>
    </component>
</protein>
<keyword id="KW-0119">Carbohydrate metabolism</keyword>
<keyword id="KW-0903">Direct protein sequencing</keyword>
<keyword id="KW-1015">Disulfide bond</keyword>
<keyword id="KW-0313">Glucose metabolism</keyword>
<keyword id="KW-0372">Hormone</keyword>
<keyword id="KW-0964">Secreted</keyword>
<accession>P09477</accession>
<organism>
    <name type="scientific">Platichthys flesus</name>
    <name type="common">European flounder</name>
    <name type="synonym">Pleuronectes flesus</name>
    <dbReference type="NCBI Taxonomy" id="8260"/>
    <lineage>
        <taxon>Eukaryota</taxon>
        <taxon>Metazoa</taxon>
        <taxon>Chordata</taxon>
        <taxon>Craniata</taxon>
        <taxon>Vertebrata</taxon>
        <taxon>Euteleostomi</taxon>
        <taxon>Actinopterygii</taxon>
        <taxon>Neopterygii</taxon>
        <taxon>Teleostei</taxon>
        <taxon>Neoteleostei</taxon>
        <taxon>Acanthomorphata</taxon>
        <taxon>Carangaria</taxon>
        <taxon>Pleuronectiformes</taxon>
        <taxon>Pleuronectoidei</taxon>
        <taxon>Pleuronectidae</taxon>
        <taxon>Platichthys</taxon>
    </lineage>
</organism>
<gene>
    <name type="primary">ins</name>
</gene>
<proteinExistence type="evidence at protein level"/>
<feature type="peptide" id="PRO_0000015882" description="Insulin B chain">
    <location>
        <begin position="1"/>
        <end position="30"/>
    </location>
</feature>
<feature type="peptide" id="PRO_0000015883" description="Insulin A chain">
    <location>
        <begin position="31"/>
        <end position="51"/>
    </location>
</feature>
<feature type="disulfide bond" description="Interchain (between B and A chains)">
    <location>
        <begin position="8"/>
        <end position="37"/>
    </location>
</feature>
<feature type="disulfide bond" description="Interchain (between B and A chains)">
    <location>
        <begin position="20"/>
        <end position="50"/>
    </location>
</feature>
<feature type="disulfide bond">
    <location>
        <begin position="36"/>
        <end position="41"/>
    </location>
</feature>
<feature type="non-consecutive residues" evidence="1">
    <location>
        <begin position="30"/>
        <end position="31"/>
    </location>
</feature>
<sequence>VVPPQHLCGAHLVDALYLVCGERGFFYTPKGIVEQCCHKPCNIFDLQNYCN</sequence>
<name>INS_PLAFE</name>
<evidence type="ECO:0000305" key="1"/>